<dbReference type="EC" id="5.3.1.9" evidence="1"/>
<dbReference type="EMBL" id="AE004092">
    <property type="protein sequence ID" value="AAK33304.1"/>
    <property type="molecule type" value="Genomic_DNA"/>
</dbReference>
<dbReference type="EMBL" id="CP000017">
    <property type="protein sequence ID" value="AAZ50804.1"/>
    <property type="molecule type" value="Genomic_DNA"/>
</dbReference>
<dbReference type="RefSeq" id="NP_268583.1">
    <property type="nucleotide sequence ID" value="NC_002737.2"/>
</dbReference>
<dbReference type="SMR" id="Q9A1L1"/>
<dbReference type="PaxDb" id="1314-HKU360_00228"/>
<dbReference type="KEGG" id="spy:SPy_0215"/>
<dbReference type="KEGG" id="spz:M5005_Spy0185"/>
<dbReference type="PATRIC" id="fig|160490.10.peg.189"/>
<dbReference type="HOGENOM" id="CLU_037303_0_1_9"/>
<dbReference type="OMA" id="CPAYAYG"/>
<dbReference type="UniPathway" id="UPA00109">
    <property type="reaction ID" value="UER00181"/>
</dbReference>
<dbReference type="UniPathway" id="UPA00138"/>
<dbReference type="Proteomes" id="UP000000750">
    <property type="component" value="Chromosome"/>
</dbReference>
<dbReference type="GO" id="GO:0005829">
    <property type="term" value="C:cytosol"/>
    <property type="evidence" value="ECO:0007669"/>
    <property type="project" value="TreeGrafter"/>
</dbReference>
<dbReference type="GO" id="GO:0097367">
    <property type="term" value="F:carbohydrate derivative binding"/>
    <property type="evidence" value="ECO:0007669"/>
    <property type="project" value="InterPro"/>
</dbReference>
<dbReference type="GO" id="GO:0004347">
    <property type="term" value="F:glucose-6-phosphate isomerase activity"/>
    <property type="evidence" value="ECO:0007669"/>
    <property type="project" value="UniProtKB-UniRule"/>
</dbReference>
<dbReference type="GO" id="GO:0048029">
    <property type="term" value="F:monosaccharide binding"/>
    <property type="evidence" value="ECO:0007669"/>
    <property type="project" value="TreeGrafter"/>
</dbReference>
<dbReference type="GO" id="GO:0006094">
    <property type="term" value="P:gluconeogenesis"/>
    <property type="evidence" value="ECO:0007669"/>
    <property type="project" value="UniProtKB-UniRule"/>
</dbReference>
<dbReference type="GO" id="GO:0051156">
    <property type="term" value="P:glucose 6-phosphate metabolic process"/>
    <property type="evidence" value="ECO:0007669"/>
    <property type="project" value="TreeGrafter"/>
</dbReference>
<dbReference type="GO" id="GO:0006096">
    <property type="term" value="P:glycolytic process"/>
    <property type="evidence" value="ECO:0007669"/>
    <property type="project" value="UniProtKB-UniRule"/>
</dbReference>
<dbReference type="CDD" id="cd05015">
    <property type="entry name" value="SIS_PGI_1"/>
    <property type="match status" value="1"/>
</dbReference>
<dbReference type="CDD" id="cd05016">
    <property type="entry name" value="SIS_PGI_2"/>
    <property type="match status" value="1"/>
</dbReference>
<dbReference type="FunFam" id="3.40.50.10490:FF:000015">
    <property type="entry name" value="Glucose-6-phosphate isomerase"/>
    <property type="match status" value="1"/>
</dbReference>
<dbReference type="FunFam" id="3.40.50.10490:FF:000016">
    <property type="entry name" value="Glucose-6-phosphate isomerase"/>
    <property type="match status" value="1"/>
</dbReference>
<dbReference type="Gene3D" id="3.40.50.10490">
    <property type="entry name" value="Glucose-6-phosphate isomerase like protein, domain 1"/>
    <property type="match status" value="2"/>
</dbReference>
<dbReference type="HAMAP" id="MF_00473">
    <property type="entry name" value="G6P_isomerase"/>
    <property type="match status" value="1"/>
</dbReference>
<dbReference type="InterPro" id="IPR001672">
    <property type="entry name" value="G6P_Isomerase"/>
</dbReference>
<dbReference type="InterPro" id="IPR018189">
    <property type="entry name" value="Phosphoglucose_isomerase_CS"/>
</dbReference>
<dbReference type="InterPro" id="IPR046348">
    <property type="entry name" value="SIS_dom_sf"/>
</dbReference>
<dbReference type="InterPro" id="IPR035476">
    <property type="entry name" value="SIS_PGI_1"/>
</dbReference>
<dbReference type="InterPro" id="IPR035482">
    <property type="entry name" value="SIS_PGI_2"/>
</dbReference>
<dbReference type="NCBIfam" id="NF010697">
    <property type="entry name" value="PRK14097.1"/>
    <property type="match status" value="1"/>
</dbReference>
<dbReference type="PANTHER" id="PTHR11469">
    <property type="entry name" value="GLUCOSE-6-PHOSPHATE ISOMERASE"/>
    <property type="match status" value="1"/>
</dbReference>
<dbReference type="PANTHER" id="PTHR11469:SF1">
    <property type="entry name" value="GLUCOSE-6-PHOSPHATE ISOMERASE"/>
    <property type="match status" value="1"/>
</dbReference>
<dbReference type="Pfam" id="PF00342">
    <property type="entry name" value="PGI"/>
    <property type="match status" value="1"/>
</dbReference>
<dbReference type="PRINTS" id="PR00662">
    <property type="entry name" value="G6PISOMERASE"/>
</dbReference>
<dbReference type="SUPFAM" id="SSF53697">
    <property type="entry name" value="SIS domain"/>
    <property type="match status" value="1"/>
</dbReference>
<dbReference type="PROSITE" id="PS00765">
    <property type="entry name" value="P_GLUCOSE_ISOMERASE_1"/>
    <property type="match status" value="1"/>
</dbReference>
<dbReference type="PROSITE" id="PS00174">
    <property type="entry name" value="P_GLUCOSE_ISOMERASE_2"/>
    <property type="match status" value="1"/>
</dbReference>
<dbReference type="PROSITE" id="PS51463">
    <property type="entry name" value="P_GLUCOSE_ISOMERASE_3"/>
    <property type="match status" value="1"/>
</dbReference>
<keyword id="KW-0963">Cytoplasm</keyword>
<keyword id="KW-0312">Gluconeogenesis</keyword>
<keyword id="KW-0324">Glycolysis</keyword>
<keyword id="KW-0413">Isomerase</keyword>
<keyword id="KW-1185">Reference proteome</keyword>
<organism>
    <name type="scientific">Streptococcus pyogenes serotype M1</name>
    <dbReference type="NCBI Taxonomy" id="301447"/>
    <lineage>
        <taxon>Bacteria</taxon>
        <taxon>Bacillati</taxon>
        <taxon>Bacillota</taxon>
        <taxon>Bacilli</taxon>
        <taxon>Lactobacillales</taxon>
        <taxon>Streptococcaceae</taxon>
        <taxon>Streptococcus</taxon>
    </lineage>
</organism>
<proteinExistence type="inferred from homology"/>
<reference key="1">
    <citation type="journal article" date="2001" name="Proc. Natl. Acad. Sci. U.S.A.">
        <title>Complete genome sequence of an M1 strain of Streptococcus pyogenes.</title>
        <authorList>
            <person name="Ferretti J.J."/>
            <person name="McShan W.M."/>
            <person name="Ajdic D.J."/>
            <person name="Savic D.J."/>
            <person name="Savic G."/>
            <person name="Lyon K."/>
            <person name="Primeaux C."/>
            <person name="Sezate S."/>
            <person name="Suvorov A.N."/>
            <person name="Kenton S."/>
            <person name="Lai H.S."/>
            <person name="Lin S.P."/>
            <person name="Qian Y."/>
            <person name="Jia H.G."/>
            <person name="Najar F.Z."/>
            <person name="Ren Q."/>
            <person name="Zhu H."/>
            <person name="Song L."/>
            <person name="White J."/>
            <person name="Yuan X."/>
            <person name="Clifton S.W."/>
            <person name="Roe B.A."/>
            <person name="McLaughlin R.E."/>
        </authorList>
    </citation>
    <scope>NUCLEOTIDE SEQUENCE [LARGE SCALE GENOMIC DNA]</scope>
    <source>
        <strain>ATCC 700294 / SF370 / Serotype M1</strain>
    </source>
</reference>
<reference key="2">
    <citation type="journal article" date="2005" name="J. Infect. Dis.">
        <title>Evolutionary origin and emergence of a highly successful clone of serotype M1 group A Streptococcus involved multiple horizontal gene transfer events.</title>
        <authorList>
            <person name="Sumby P."/>
            <person name="Porcella S.F."/>
            <person name="Madrigal A.G."/>
            <person name="Barbian K.D."/>
            <person name="Virtaneva K."/>
            <person name="Ricklefs S.M."/>
            <person name="Sturdevant D.E."/>
            <person name="Graham M.R."/>
            <person name="Vuopio-Varkila J."/>
            <person name="Hoe N.P."/>
            <person name="Musser J.M."/>
        </authorList>
    </citation>
    <scope>NUCLEOTIDE SEQUENCE [LARGE SCALE GENOMIC DNA]</scope>
    <source>
        <strain>ATCC BAA-947 / MGAS5005 / Serotype M1</strain>
    </source>
</reference>
<accession>Q9A1L1</accession>
<accession>Q491B4</accession>
<comment type="function">
    <text evidence="1">Catalyzes the reversible isomerization of glucose-6-phosphate to fructose-6-phosphate.</text>
</comment>
<comment type="catalytic activity">
    <reaction evidence="1">
        <text>alpha-D-glucose 6-phosphate = beta-D-fructose 6-phosphate</text>
        <dbReference type="Rhea" id="RHEA:11816"/>
        <dbReference type="ChEBI" id="CHEBI:57634"/>
        <dbReference type="ChEBI" id="CHEBI:58225"/>
        <dbReference type="EC" id="5.3.1.9"/>
    </reaction>
</comment>
<comment type="pathway">
    <text evidence="1">Carbohydrate biosynthesis; gluconeogenesis.</text>
</comment>
<comment type="pathway">
    <text evidence="1">Carbohydrate degradation; glycolysis; D-glyceraldehyde 3-phosphate and glycerone phosphate from D-glucose: step 2/4.</text>
</comment>
<comment type="subcellular location">
    <subcellularLocation>
        <location evidence="1">Cytoplasm</location>
    </subcellularLocation>
</comment>
<comment type="similarity">
    <text evidence="1 2">Belongs to the GPI family.</text>
</comment>
<protein>
    <recommendedName>
        <fullName evidence="1">Glucose-6-phosphate isomerase</fullName>
        <shortName evidence="1">GPI</shortName>
        <ecNumber evidence="1">5.3.1.9</ecNumber>
    </recommendedName>
    <alternativeName>
        <fullName evidence="1">Phosphoglucose isomerase</fullName>
        <shortName evidence="1">PGI</shortName>
    </alternativeName>
    <alternativeName>
        <fullName evidence="1">Phosphohexose isomerase</fullName>
        <shortName evidence="1">PHI</shortName>
    </alternativeName>
</protein>
<sequence length="449" mass="49453">MSHITFDYSKVLESFAGQHEIDFLQGQVTEADKLLREGTGPGSDFLGWLDLPENYDKDEFARILTAAEKIKADSEVLVVIGIGGSYLGAKAAIDFLNHHFANLQTAKERKAPQILYAGNSISSTYLADLVEYVQDKEFSVNVISKSGTTTEPAIAFRVFKELLVKKYGQEEANKRIYATTDKVKGAVKVEADANNWETFVVPDNVGGRFSVLTAVGLLPIAASGADITALMEGANAARKDLSSDKISENIAYQYAAVRNVLYRKGYITEILANYEPSLQYFGEWWKQLAGESEGKDQKGIYPTSANFSTDLHSLGQFIQEGYRNLFETVIRVDNPRKNVIIPELAEDLDGLGYLQGKDVDFVNKKATDGVLLAHTDGGVPNMFVTLPAQDEFTLGYTIYFFELAIAVSGYMNAVNPFDQPGVEAYKRNMFALLGKPGFEALSAELNARL</sequence>
<name>G6PI_STRP1</name>
<feature type="chain" id="PRO_0000180740" description="Glucose-6-phosphate isomerase">
    <location>
        <begin position="1"/>
        <end position="449"/>
    </location>
</feature>
<feature type="active site" description="Proton donor" evidence="1">
    <location>
        <position position="291"/>
    </location>
</feature>
<feature type="active site" evidence="1">
    <location>
        <position position="312"/>
    </location>
</feature>
<feature type="active site" evidence="1">
    <location>
        <position position="426"/>
    </location>
</feature>
<gene>
    <name evidence="1" type="primary">pgi</name>
    <name type="ordered locus">SPy_0215</name>
    <name type="ordered locus">M5005_Spy0185</name>
</gene>
<evidence type="ECO:0000255" key="1">
    <source>
        <dbReference type="HAMAP-Rule" id="MF_00473"/>
    </source>
</evidence>
<evidence type="ECO:0000305" key="2"/>